<name>RL27_AERHH</name>
<organism>
    <name type="scientific">Aeromonas hydrophila subsp. hydrophila (strain ATCC 7966 / DSM 30187 / BCRC 13018 / CCUG 14551 / JCM 1027 / KCTC 2358 / NCIMB 9240 / NCTC 8049)</name>
    <dbReference type="NCBI Taxonomy" id="380703"/>
    <lineage>
        <taxon>Bacteria</taxon>
        <taxon>Pseudomonadati</taxon>
        <taxon>Pseudomonadota</taxon>
        <taxon>Gammaproteobacteria</taxon>
        <taxon>Aeromonadales</taxon>
        <taxon>Aeromonadaceae</taxon>
        <taxon>Aeromonas</taxon>
    </lineage>
</organism>
<reference key="1">
    <citation type="journal article" date="2006" name="J. Bacteriol.">
        <title>Genome sequence of Aeromonas hydrophila ATCC 7966T: jack of all trades.</title>
        <authorList>
            <person name="Seshadri R."/>
            <person name="Joseph S.W."/>
            <person name="Chopra A.K."/>
            <person name="Sha J."/>
            <person name="Shaw J."/>
            <person name="Graf J."/>
            <person name="Haft D.H."/>
            <person name="Wu M."/>
            <person name="Ren Q."/>
            <person name="Rosovitz M.J."/>
            <person name="Madupu R."/>
            <person name="Tallon L."/>
            <person name="Kim M."/>
            <person name="Jin S."/>
            <person name="Vuong H."/>
            <person name="Stine O.C."/>
            <person name="Ali A."/>
            <person name="Horneman A.J."/>
            <person name="Heidelberg J.F."/>
        </authorList>
    </citation>
    <scope>NUCLEOTIDE SEQUENCE [LARGE SCALE GENOMIC DNA]</scope>
    <source>
        <strain>ATCC 7966 / DSM 30187 / BCRC 13018 / CCUG 14551 / JCM 1027 / KCTC 2358 / NCIMB 9240 / NCTC 8049</strain>
    </source>
</reference>
<proteinExistence type="inferred from homology"/>
<comment type="similarity">
    <text evidence="1">Belongs to the bacterial ribosomal protein bL27 family.</text>
</comment>
<protein>
    <recommendedName>
        <fullName evidence="1">Large ribosomal subunit protein bL27</fullName>
    </recommendedName>
    <alternativeName>
        <fullName evidence="3">50S ribosomal protein L27</fullName>
    </alternativeName>
</protein>
<dbReference type="EMBL" id="CP000462">
    <property type="protein sequence ID" value="ABK37646.1"/>
    <property type="molecule type" value="Genomic_DNA"/>
</dbReference>
<dbReference type="RefSeq" id="WP_005339028.1">
    <property type="nucleotide sequence ID" value="NC_008570.1"/>
</dbReference>
<dbReference type="RefSeq" id="YP_855474.1">
    <property type="nucleotide sequence ID" value="NC_008570.1"/>
</dbReference>
<dbReference type="SMR" id="A0KGS8"/>
<dbReference type="STRING" id="380703.AHA_0931"/>
<dbReference type="EnsemblBacteria" id="ABK37646">
    <property type="protein sequence ID" value="ABK37646"/>
    <property type="gene ID" value="AHA_0931"/>
</dbReference>
<dbReference type="GeneID" id="60846742"/>
<dbReference type="KEGG" id="aha:AHA_0931"/>
<dbReference type="PATRIC" id="fig|380703.7.peg.931"/>
<dbReference type="eggNOG" id="COG0211">
    <property type="taxonomic scope" value="Bacteria"/>
</dbReference>
<dbReference type="HOGENOM" id="CLU_095424_4_1_6"/>
<dbReference type="OrthoDB" id="9803474at2"/>
<dbReference type="PRO" id="PR:A0KGS8"/>
<dbReference type="Proteomes" id="UP000000756">
    <property type="component" value="Chromosome"/>
</dbReference>
<dbReference type="GO" id="GO:0022625">
    <property type="term" value="C:cytosolic large ribosomal subunit"/>
    <property type="evidence" value="ECO:0007669"/>
    <property type="project" value="TreeGrafter"/>
</dbReference>
<dbReference type="GO" id="GO:0003735">
    <property type="term" value="F:structural constituent of ribosome"/>
    <property type="evidence" value="ECO:0007669"/>
    <property type="project" value="InterPro"/>
</dbReference>
<dbReference type="GO" id="GO:0006412">
    <property type="term" value="P:translation"/>
    <property type="evidence" value="ECO:0007669"/>
    <property type="project" value="UniProtKB-UniRule"/>
</dbReference>
<dbReference type="FunFam" id="2.40.50.100:FF:000001">
    <property type="entry name" value="50S ribosomal protein L27"/>
    <property type="match status" value="1"/>
</dbReference>
<dbReference type="Gene3D" id="2.40.50.100">
    <property type="match status" value="1"/>
</dbReference>
<dbReference type="HAMAP" id="MF_00539">
    <property type="entry name" value="Ribosomal_bL27"/>
    <property type="match status" value="1"/>
</dbReference>
<dbReference type="InterPro" id="IPR001684">
    <property type="entry name" value="Ribosomal_bL27"/>
</dbReference>
<dbReference type="InterPro" id="IPR018261">
    <property type="entry name" value="Ribosomal_bL27_CS"/>
</dbReference>
<dbReference type="NCBIfam" id="TIGR00062">
    <property type="entry name" value="L27"/>
    <property type="match status" value="1"/>
</dbReference>
<dbReference type="PANTHER" id="PTHR15893:SF0">
    <property type="entry name" value="LARGE RIBOSOMAL SUBUNIT PROTEIN BL27M"/>
    <property type="match status" value="1"/>
</dbReference>
<dbReference type="PANTHER" id="PTHR15893">
    <property type="entry name" value="RIBOSOMAL PROTEIN L27"/>
    <property type="match status" value="1"/>
</dbReference>
<dbReference type="Pfam" id="PF01016">
    <property type="entry name" value="Ribosomal_L27"/>
    <property type="match status" value="1"/>
</dbReference>
<dbReference type="PRINTS" id="PR00063">
    <property type="entry name" value="RIBOSOMALL27"/>
</dbReference>
<dbReference type="SUPFAM" id="SSF110324">
    <property type="entry name" value="Ribosomal L27 protein-like"/>
    <property type="match status" value="1"/>
</dbReference>
<dbReference type="PROSITE" id="PS00831">
    <property type="entry name" value="RIBOSOMAL_L27"/>
    <property type="match status" value="1"/>
</dbReference>
<evidence type="ECO:0000255" key="1">
    <source>
        <dbReference type="HAMAP-Rule" id="MF_00539"/>
    </source>
</evidence>
<evidence type="ECO:0000256" key="2">
    <source>
        <dbReference type="SAM" id="MobiDB-lite"/>
    </source>
</evidence>
<evidence type="ECO:0000305" key="3"/>
<accession>A0KGS8</accession>
<sequence length="85" mass="9051">MAHKKAGGSSRNGRDSEAKRLGVKRFGGETVLAGSIIVRQRGTKFHAGTNVGLGKDHTLFATATGKILFEVKGPLNRKYVSIVAE</sequence>
<keyword id="KW-1185">Reference proteome</keyword>
<keyword id="KW-0687">Ribonucleoprotein</keyword>
<keyword id="KW-0689">Ribosomal protein</keyword>
<feature type="chain" id="PRO_1000017399" description="Large ribosomal subunit protein bL27">
    <location>
        <begin position="1"/>
        <end position="85"/>
    </location>
</feature>
<feature type="region of interest" description="Disordered" evidence="2">
    <location>
        <begin position="1"/>
        <end position="21"/>
    </location>
</feature>
<gene>
    <name evidence="1" type="primary">rpmA</name>
    <name type="ordered locus">AHA_0931</name>
</gene>